<reference key="1">
    <citation type="journal article" date="2007" name="PLoS ONE">
        <title>Analysis of the neurotoxin complex genes in Clostridium botulinum A1-A4 and B1 strains: BoNT/A3, /Ba4 and /B1 clusters are located within plasmids.</title>
        <authorList>
            <person name="Smith T.J."/>
            <person name="Hill K.K."/>
            <person name="Foley B.T."/>
            <person name="Detter J.C."/>
            <person name="Munk A.C."/>
            <person name="Bruce D.C."/>
            <person name="Doggett N.A."/>
            <person name="Smith L.A."/>
            <person name="Marks J.D."/>
            <person name="Xie G."/>
            <person name="Brettin T.S."/>
        </authorList>
    </citation>
    <scope>NUCLEOTIDE SEQUENCE [LARGE SCALE GENOMIC DNA]</scope>
    <source>
        <strain>ATCC 19397 / Type A</strain>
    </source>
</reference>
<gene>
    <name evidence="1" type="primary">tsf</name>
    <name type="ordered locus">CLB_2298</name>
</gene>
<evidence type="ECO:0000255" key="1">
    <source>
        <dbReference type="HAMAP-Rule" id="MF_00050"/>
    </source>
</evidence>
<keyword id="KW-0963">Cytoplasm</keyword>
<keyword id="KW-0251">Elongation factor</keyword>
<keyword id="KW-0648">Protein biosynthesis</keyword>
<protein>
    <recommendedName>
        <fullName evidence="1">Elongation factor Ts</fullName>
        <shortName evidence="1">EF-Ts</shortName>
    </recommendedName>
</protein>
<sequence>MISAKMVKDLREKTGAGMMDCKKALTECDGDLEKAVEVLREKGLAAAAKKSGRVAAEGIVSTYISEDMKNGSIVEFNCETDFVSVNELFVELANNLSKQAAFSNVSTAEELLEEKYIADESKLVKDVITELIAKLGENMNLRRIAKLSVDKGVITSYIHGGGRIGVLVKLACEKEDAKLAEIAKDVAMQVAATNPLFLNRDGVDTDTLEKEKEIYRVQALNEGKPEKVVEKMVMGRINKYYKENCLVEQLWVKNGDYTITKYLQEQSKEIGADITVEAFVRYEKGEGIEKKEEDFAEEVQRQMNQGK</sequence>
<feature type="chain" id="PRO_1000006076" description="Elongation factor Ts">
    <location>
        <begin position="1"/>
        <end position="307"/>
    </location>
</feature>
<feature type="region of interest" description="Involved in Mg(2+) ion dislocation from EF-Tu" evidence="1">
    <location>
        <begin position="80"/>
        <end position="83"/>
    </location>
</feature>
<organism>
    <name type="scientific">Clostridium botulinum (strain ATCC 19397 / Type A)</name>
    <dbReference type="NCBI Taxonomy" id="441770"/>
    <lineage>
        <taxon>Bacteria</taxon>
        <taxon>Bacillati</taxon>
        <taxon>Bacillota</taxon>
        <taxon>Clostridia</taxon>
        <taxon>Eubacteriales</taxon>
        <taxon>Clostridiaceae</taxon>
        <taxon>Clostridium</taxon>
    </lineage>
</organism>
<comment type="function">
    <text evidence="1">Associates with the EF-Tu.GDP complex and induces the exchange of GDP to GTP. It remains bound to the aminoacyl-tRNA.EF-Tu.GTP complex up to the GTP hydrolysis stage on the ribosome.</text>
</comment>
<comment type="subcellular location">
    <subcellularLocation>
        <location evidence="1">Cytoplasm</location>
    </subcellularLocation>
</comment>
<comment type="similarity">
    <text evidence="1">Belongs to the EF-Ts family.</text>
</comment>
<dbReference type="EMBL" id="CP000726">
    <property type="protein sequence ID" value="ABS32587.1"/>
    <property type="molecule type" value="Genomic_DNA"/>
</dbReference>
<dbReference type="RefSeq" id="WP_003384678.1">
    <property type="nucleotide sequence ID" value="NC_009697.1"/>
</dbReference>
<dbReference type="SMR" id="A7FPZ7"/>
<dbReference type="GeneID" id="92939185"/>
<dbReference type="KEGG" id="cba:CLB_2298"/>
<dbReference type="HOGENOM" id="CLU_047155_0_0_9"/>
<dbReference type="GO" id="GO:0005737">
    <property type="term" value="C:cytoplasm"/>
    <property type="evidence" value="ECO:0007669"/>
    <property type="project" value="UniProtKB-SubCell"/>
</dbReference>
<dbReference type="GO" id="GO:0003746">
    <property type="term" value="F:translation elongation factor activity"/>
    <property type="evidence" value="ECO:0007669"/>
    <property type="project" value="UniProtKB-UniRule"/>
</dbReference>
<dbReference type="CDD" id="cd14275">
    <property type="entry name" value="UBA_EF-Ts"/>
    <property type="match status" value="1"/>
</dbReference>
<dbReference type="FunFam" id="1.10.286.20:FF:000001">
    <property type="entry name" value="Elongation factor Ts"/>
    <property type="match status" value="1"/>
</dbReference>
<dbReference type="FunFam" id="1.10.8.10:FF:000001">
    <property type="entry name" value="Elongation factor Ts"/>
    <property type="match status" value="1"/>
</dbReference>
<dbReference type="Gene3D" id="1.10.286.20">
    <property type="match status" value="1"/>
</dbReference>
<dbReference type="Gene3D" id="1.10.8.10">
    <property type="entry name" value="DNA helicase RuvA subunit, C-terminal domain"/>
    <property type="match status" value="1"/>
</dbReference>
<dbReference type="Gene3D" id="3.30.479.20">
    <property type="entry name" value="Elongation factor Ts, dimerisation domain"/>
    <property type="match status" value="2"/>
</dbReference>
<dbReference type="HAMAP" id="MF_00050">
    <property type="entry name" value="EF_Ts"/>
    <property type="match status" value="1"/>
</dbReference>
<dbReference type="InterPro" id="IPR036402">
    <property type="entry name" value="EF-Ts_dimer_sf"/>
</dbReference>
<dbReference type="InterPro" id="IPR001816">
    <property type="entry name" value="Transl_elong_EFTs/EF1B"/>
</dbReference>
<dbReference type="InterPro" id="IPR014039">
    <property type="entry name" value="Transl_elong_EFTs/EF1B_dimer"/>
</dbReference>
<dbReference type="InterPro" id="IPR018101">
    <property type="entry name" value="Transl_elong_Ts_CS"/>
</dbReference>
<dbReference type="InterPro" id="IPR009060">
    <property type="entry name" value="UBA-like_sf"/>
</dbReference>
<dbReference type="NCBIfam" id="TIGR00116">
    <property type="entry name" value="tsf"/>
    <property type="match status" value="1"/>
</dbReference>
<dbReference type="PANTHER" id="PTHR11741">
    <property type="entry name" value="ELONGATION FACTOR TS"/>
    <property type="match status" value="1"/>
</dbReference>
<dbReference type="PANTHER" id="PTHR11741:SF0">
    <property type="entry name" value="ELONGATION FACTOR TS, MITOCHONDRIAL"/>
    <property type="match status" value="1"/>
</dbReference>
<dbReference type="Pfam" id="PF00889">
    <property type="entry name" value="EF_TS"/>
    <property type="match status" value="1"/>
</dbReference>
<dbReference type="SUPFAM" id="SSF54713">
    <property type="entry name" value="Elongation factor Ts (EF-Ts), dimerisation domain"/>
    <property type="match status" value="2"/>
</dbReference>
<dbReference type="SUPFAM" id="SSF46934">
    <property type="entry name" value="UBA-like"/>
    <property type="match status" value="1"/>
</dbReference>
<dbReference type="PROSITE" id="PS01126">
    <property type="entry name" value="EF_TS_1"/>
    <property type="match status" value="1"/>
</dbReference>
<accession>A7FPZ7</accession>
<name>EFTS_CLOB1</name>
<proteinExistence type="inferred from homology"/>